<sequence length="394" mass="43725">MDEGTRTVLRKFEHIEHCLKRNVEAHATNGFEDVHFVHMSLPEIDKDEIDLSVKFLGRKFDYPIMITGMTGGTRKGEVAWKINRTLAQAAEELNIPLGVGSQRAMIEKPETWESYYVRDVAPNVFLVGNLGAPQFGRNAKRKYGVKEVLYAIEKIDADAIAIHMNPLQESVQPEGDTTFSGVLEALAEITSSIDYPVIAKETGAGVSKEVAIKLESIGVSAIDISGVGGTSWSGVEYYRAKDELGKRLALRFWDWGIKTAISLAEVRFSTNLPIIASGGMRDGITMAKALAMGASLVGIALPVLKPAAKGDVEGVIKVIKGYVEEIKNAMFLVGARNVEELRKVPIVFTGFVREWLEQRIDLQEFVKKRAKLRFEFWNVGFYSYPYTSSSTHLF</sequence>
<gene>
    <name evidence="1" type="primary">fni</name>
    <name type="ordered locus">PF0856</name>
</gene>
<dbReference type="EC" id="5.3.3.2" evidence="1"/>
<dbReference type="EMBL" id="AE009950">
    <property type="protein sequence ID" value="AAL80980.1"/>
    <property type="molecule type" value="Genomic_DNA"/>
</dbReference>
<dbReference type="RefSeq" id="WP_011011987.1">
    <property type="nucleotide sequence ID" value="NC_003413.1"/>
</dbReference>
<dbReference type="SMR" id="Q8U2H9"/>
<dbReference type="STRING" id="186497.PF0856"/>
<dbReference type="PaxDb" id="186497-PF0856"/>
<dbReference type="GeneID" id="1468714"/>
<dbReference type="KEGG" id="pfu:PF0856"/>
<dbReference type="PATRIC" id="fig|186497.12.peg.906"/>
<dbReference type="eggNOG" id="arCOG00613">
    <property type="taxonomic scope" value="Archaea"/>
</dbReference>
<dbReference type="HOGENOM" id="CLU_065515_1_0_2"/>
<dbReference type="OrthoDB" id="371955at2157"/>
<dbReference type="PhylomeDB" id="Q8U2H9"/>
<dbReference type="Proteomes" id="UP000001013">
    <property type="component" value="Chromosome"/>
</dbReference>
<dbReference type="GO" id="GO:0005737">
    <property type="term" value="C:cytoplasm"/>
    <property type="evidence" value="ECO:0007669"/>
    <property type="project" value="UniProtKB-SubCell"/>
</dbReference>
<dbReference type="GO" id="GO:0010181">
    <property type="term" value="F:FMN binding"/>
    <property type="evidence" value="ECO:0007669"/>
    <property type="project" value="UniProtKB-UniRule"/>
</dbReference>
<dbReference type="GO" id="GO:0004452">
    <property type="term" value="F:isopentenyl-diphosphate delta-isomerase activity"/>
    <property type="evidence" value="ECO:0007669"/>
    <property type="project" value="UniProtKB-UniRule"/>
</dbReference>
<dbReference type="GO" id="GO:0000287">
    <property type="term" value="F:magnesium ion binding"/>
    <property type="evidence" value="ECO:0007669"/>
    <property type="project" value="UniProtKB-UniRule"/>
</dbReference>
<dbReference type="GO" id="GO:0070402">
    <property type="term" value="F:NADPH binding"/>
    <property type="evidence" value="ECO:0007669"/>
    <property type="project" value="UniProtKB-UniRule"/>
</dbReference>
<dbReference type="GO" id="GO:0016491">
    <property type="term" value="F:oxidoreductase activity"/>
    <property type="evidence" value="ECO:0007669"/>
    <property type="project" value="InterPro"/>
</dbReference>
<dbReference type="GO" id="GO:0008299">
    <property type="term" value="P:isoprenoid biosynthetic process"/>
    <property type="evidence" value="ECO:0007669"/>
    <property type="project" value="UniProtKB-UniRule"/>
</dbReference>
<dbReference type="CDD" id="cd02811">
    <property type="entry name" value="IDI-2_FMN"/>
    <property type="match status" value="1"/>
</dbReference>
<dbReference type="Gene3D" id="3.20.20.70">
    <property type="entry name" value="Aldolase class I"/>
    <property type="match status" value="1"/>
</dbReference>
<dbReference type="HAMAP" id="MF_00354">
    <property type="entry name" value="Idi_2"/>
    <property type="match status" value="1"/>
</dbReference>
<dbReference type="InterPro" id="IPR013785">
    <property type="entry name" value="Aldolase_TIM"/>
</dbReference>
<dbReference type="InterPro" id="IPR000262">
    <property type="entry name" value="FMN-dep_DH"/>
</dbReference>
<dbReference type="InterPro" id="IPR011179">
    <property type="entry name" value="IPdP_isomerase"/>
</dbReference>
<dbReference type="NCBIfam" id="TIGR02151">
    <property type="entry name" value="IPP_isom_2"/>
    <property type="match status" value="1"/>
</dbReference>
<dbReference type="PANTHER" id="PTHR43665">
    <property type="entry name" value="ISOPENTENYL-DIPHOSPHATE DELTA-ISOMERASE"/>
    <property type="match status" value="1"/>
</dbReference>
<dbReference type="PANTHER" id="PTHR43665:SF1">
    <property type="entry name" value="ISOPENTENYL-DIPHOSPHATE DELTA-ISOMERASE"/>
    <property type="match status" value="1"/>
</dbReference>
<dbReference type="Pfam" id="PF01070">
    <property type="entry name" value="FMN_dh"/>
    <property type="match status" value="1"/>
</dbReference>
<dbReference type="PIRSF" id="PIRSF003314">
    <property type="entry name" value="IPP_isomerase"/>
    <property type="match status" value="1"/>
</dbReference>
<dbReference type="SMART" id="SM01240">
    <property type="entry name" value="IMPDH"/>
    <property type="match status" value="1"/>
</dbReference>
<dbReference type="SUPFAM" id="SSF51395">
    <property type="entry name" value="FMN-linked oxidoreductases"/>
    <property type="match status" value="1"/>
</dbReference>
<feature type="chain" id="PRO_0000134451" description="Isopentenyl-diphosphate delta-isomerase">
    <location>
        <begin position="1"/>
        <end position="394"/>
    </location>
</feature>
<feature type="binding site" evidence="1">
    <location>
        <begin position="10"/>
        <end position="11"/>
    </location>
    <ligand>
        <name>substrate</name>
    </ligand>
</feature>
<feature type="binding site" evidence="1">
    <location>
        <position position="67"/>
    </location>
    <ligand>
        <name>FMN</name>
        <dbReference type="ChEBI" id="CHEBI:58210"/>
    </ligand>
</feature>
<feature type="binding site" evidence="1">
    <location>
        <begin position="68"/>
        <end position="70"/>
    </location>
    <ligand>
        <name>FMN</name>
        <dbReference type="ChEBI" id="CHEBI:58210"/>
    </ligand>
</feature>
<feature type="binding site" evidence="1">
    <location>
        <begin position="101"/>
        <end position="103"/>
    </location>
    <ligand>
        <name>substrate</name>
    </ligand>
</feature>
<feature type="binding site" evidence="1">
    <location>
        <position position="101"/>
    </location>
    <ligand>
        <name>FMN</name>
        <dbReference type="ChEBI" id="CHEBI:58210"/>
    </ligand>
</feature>
<feature type="binding site" evidence="1">
    <location>
        <position position="129"/>
    </location>
    <ligand>
        <name>FMN</name>
        <dbReference type="ChEBI" id="CHEBI:58210"/>
    </ligand>
</feature>
<feature type="binding site" evidence="1">
    <location>
        <position position="168"/>
    </location>
    <ligand>
        <name>substrate</name>
    </ligand>
</feature>
<feature type="binding site" evidence="1">
    <location>
        <position position="169"/>
    </location>
    <ligand>
        <name>Mg(2+)</name>
        <dbReference type="ChEBI" id="CHEBI:18420"/>
    </ligand>
</feature>
<feature type="binding site" evidence="1">
    <location>
        <position position="200"/>
    </location>
    <ligand>
        <name>FMN</name>
        <dbReference type="ChEBI" id="CHEBI:58210"/>
    </ligand>
</feature>
<feature type="binding site" evidence="1">
    <location>
        <position position="225"/>
    </location>
    <ligand>
        <name>FMN</name>
        <dbReference type="ChEBI" id="CHEBI:58210"/>
    </ligand>
</feature>
<feature type="binding site" evidence="1">
    <location>
        <position position="230"/>
    </location>
    <ligand>
        <name>FMN</name>
        <dbReference type="ChEBI" id="CHEBI:58210"/>
    </ligand>
</feature>
<feature type="binding site" evidence="1">
    <location>
        <begin position="279"/>
        <end position="281"/>
    </location>
    <ligand>
        <name>FMN</name>
        <dbReference type="ChEBI" id="CHEBI:58210"/>
    </ligand>
</feature>
<feature type="binding site" evidence="1">
    <location>
        <begin position="300"/>
        <end position="301"/>
    </location>
    <ligand>
        <name>FMN</name>
        <dbReference type="ChEBI" id="CHEBI:58210"/>
    </ligand>
</feature>
<organism>
    <name type="scientific">Pyrococcus furiosus (strain ATCC 43587 / DSM 3638 / JCM 8422 / Vc1)</name>
    <dbReference type="NCBI Taxonomy" id="186497"/>
    <lineage>
        <taxon>Archaea</taxon>
        <taxon>Methanobacteriati</taxon>
        <taxon>Methanobacteriota</taxon>
        <taxon>Thermococci</taxon>
        <taxon>Thermococcales</taxon>
        <taxon>Thermococcaceae</taxon>
        <taxon>Pyrococcus</taxon>
    </lineage>
</organism>
<accession>Q8U2H9</accession>
<keyword id="KW-0963">Cytoplasm</keyword>
<keyword id="KW-0285">Flavoprotein</keyword>
<keyword id="KW-0288">FMN</keyword>
<keyword id="KW-0413">Isomerase</keyword>
<keyword id="KW-0414">Isoprene biosynthesis</keyword>
<keyword id="KW-0460">Magnesium</keyword>
<keyword id="KW-0479">Metal-binding</keyword>
<keyword id="KW-0521">NADP</keyword>
<keyword id="KW-1185">Reference proteome</keyword>
<proteinExistence type="inferred from homology"/>
<comment type="function">
    <text evidence="1">Involved in the biosynthesis of isoprenoids. Catalyzes the 1,3-allylic rearrangement of the homoallylic substrate isopentenyl (IPP) to its allylic isomer, dimethylallyl diphosphate (DMAPP).</text>
</comment>
<comment type="catalytic activity">
    <reaction evidence="1">
        <text>isopentenyl diphosphate = dimethylallyl diphosphate</text>
        <dbReference type="Rhea" id="RHEA:23284"/>
        <dbReference type="ChEBI" id="CHEBI:57623"/>
        <dbReference type="ChEBI" id="CHEBI:128769"/>
        <dbReference type="EC" id="5.3.3.2"/>
    </reaction>
</comment>
<comment type="cofactor">
    <cofactor evidence="1">
        <name>FMN</name>
        <dbReference type="ChEBI" id="CHEBI:58210"/>
    </cofactor>
</comment>
<comment type="cofactor">
    <cofactor evidence="1">
        <name>NADPH</name>
        <dbReference type="ChEBI" id="CHEBI:57783"/>
    </cofactor>
</comment>
<comment type="cofactor">
    <cofactor evidence="1">
        <name>Mg(2+)</name>
        <dbReference type="ChEBI" id="CHEBI:18420"/>
    </cofactor>
</comment>
<comment type="subunit">
    <text evidence="1">Homooctamer. Dimer of tetramers.</text>
</comment>
<comment type="subcellular location">
    <subcellularLocation>
        <location evidence="1">Cytoplasm</location>
    </subcellularLocation>
</comment>
<comment type="similarity">
    <text evidence="1">Belongs to the IPP isomerase type 2 family.</text>
</comment>
<evidence type="ECO:0000255" key="1">
    <source>
        <dbReference type="HAMAP-Rule" id="MF_00354"/>
    </source>
</evidence>
<name>IDI2_PYRFU</name>
<reference key="1">
    <citation type="journal article" date="1999" name="Genetics">
        <title>Divergence of the hyperthermophilic archaea Pyrococcus furiosus and P. horikoshii inferred from complete genomic sequences.</title>
        <authorList>
            <person name="Maeder D.L."/>
            <person name="Weiss R.B."/>
            <person name="Dunn D.M."/>
            <person name="Cherry J.L."/>
            <person name="Gonzalez J.M."/>
            <person name="DiRuggiero J."/>
            <person name="Robb F.T."/>
        </authorList>
    </citation>
    <scope>NUCLEOTIDE SEQUENCE [LARGE SCALE GENOMIC DNA]</scope>
    <source>
        <strain>ATCC 43587 / DSM 3638 / JCM 8422 / Vc1</strain>
    </source>
</reference>
<protein>
    <recommendedName>
        <fullName evidence="1">Isopentenyl-diphosphate delta-isomerase</fullName>
        <shortName evidence="1">IPP isomerase</shortName>
        <ecNumber evidence="1">5.3.3.2</ecNumber>
    </recommendedName>
    <alternativeName>
        <fullName evidence="1">Isopentenyl diphosphate:dimethylallyl diphosphate isomerase</fullName>
    </alternativeName>
    <alternativeName>
        <fullName evidence="1">Isopentenyl pyrophosphate isomerase</fullName>
    </alternativeName>
    <alternativeName>
        <fullName evidence="1">Type 2 isopentenyl diphosphate isomerase</fullName>
        <shortName evidence="1">IDI-2</shortName>
    </alternativeName>
</protein>